<keyword id="KW-0012">Acyltransferase</keyword>
<keyword id="KW-0046">Antibiotic resistance</keyword>
<keyword id="KW-0133">Cell shape</keyword>
<keyword id="KW-0961">Cell wall biogenesis/degradation</keyword>
<keyword id="KW-0963">Cytoplasm</keyword>
<keyword id="KW-0573">Peptidoglycan synthesis</keyword>
<keyword id="KW-0808">Transferase</keyword>
<comment type="function">
    <text evidence="1">Catalyzes the formation of the pentaglycine interpeptide bridge, which is characteristic of the S.aureus peptidoglycan. Adds glycines 4 and 5 of the pentaglycine bridge, using glycyl-tRNA(Gly) as donor. Involved in resistance to methicillin (By similarity).</text>
</comment>
<comment type="catalytic activity">
    <reaction>
        <text>MurNAc-L-Ala-D-isoglutaminyl-L-Lys-(N(6)-tri-Gly)-D-Ala-D-Ala-diphospho-di-trans,octa-cis-undecaprenyl-GlcNAc + 2 glycyl-tRNA(Gly) = MurNAc-L-Ala-D-isoglutaminyl-L-Lys-(N(6)-penta-Gly)-D-Ala-D-Ala-diphospho-di-trans,octa-cis-undecaprenyl-GlcNAc + 2 tRNA(Gly) + 2 H(+)</text>
        <dbReference type="Rhea" id="RHEA:30443"/>
        <dbReference type="Rhea" id="RHEA-COMP:9664"/>
        <dbReference type="Rhea" id="RHEA-COMP:9683"/>
        <dbReference type="ChEBI" id="CHEBI:15378"/>
        <dbReference type="ChEBI" id="CHEBI:62235"/>
        <dbReference type="ChEBI" id="CHEBI:62236"/>
        <dbReference type="ChEBI" id="CHEBI:78442"/>
        <dbReference type="ChEBI" id="CHEBI:78522"/>
        <dbReference type="EC" id="2.3.2.18"/>
    </reaction>
</comment>
<comment type="subunit">
    <text evidence="1">Homodimer. Interacts with FemA (By similarity).</text>
</comment>
<comment type="subcellular location">
    <subcellularLocation>
        <location evidence="1">Cytoplasm</location>
    </subcellularLocation>
</comment>
<comment type="similarity">
    <text evidence="2">Belongs to the FemABX family.</text>
</comment>
<reference key="1">
    <citation type="journal article" date="2002" name="Lancet">
        <title>Genome and virulence determinants of high virulence community-acquired MRSA.</title>
        <authorList>
            <person name="Baba T."/>
            <person name="Takeuchi F."/>
            <person name="Kuroda M."/>
            <person name="Yuzawa H."/>
            <person name="Aoki K."/>
            <person name="Oguchi A."/>
            <person name="Nagai Y."/>
            <person name="Iwama N."/>
            <person name="Asano K."/>
            <person name="Naimi T."/>
            <person name="Kuroda H."/>
            <person name="Cui L."/>
            <person name="Yamamoto K."/>
            <person name="Hiramatsu K."/>
        </authorList>
    </citation>
    <scope>NUCLEOTIDE SEQUENCE [LARGE SCALE GENOMIC DNA]</scope>
    <source>
        <strain>MW2</strain>
    </source>
</reference>
<feature type="chain" id="PRO_0000204744" description="Aminoacyltransferase FemB">
    <location>
        <begin position="1"/>
        <end position="419"/>
    </location>
</feature>
<organism>
    <name type="scientific">Staphylococcus aureus (strain MW2)</name>
    <dbReference type="NCBI Taxonomy" id="196620"/>
    <lineage>
        <taxon>Bacteria</taxon>
        <taxon>Bacillati</taxon>
        <taxon>Bacillota</taxon>
        <taxon>Bacilli</taxon>
        <taxon>Bacillales</taxon>
        <taxon>Staphylococcaceae</taxon>
        <taxon>Staphylococcus</taxon>
    </lineage>
</organism>
<protein>
    <recommendedName>
        <fullName>Aminoacyltransferase FemB</fullName>
        <ecNumber>2.3.2.18</ecNumber>
    </recommendedName>
    <alternativeName>
        <fullName>Factor essential for expression of methicillin resistance B</fullName>
    </alternativeName>
    <alternativeName>
        <fullName>N-acetylmuramoyl-L-alanyl-D-glutamyl-L-lysyl-(N6-triglycine)-D-alanyl-D-alanine-diphosphoundecaprenyl-N-acetylglucosamine:glycine glycyltransferase</fullName>
    </alternativeName>
</protein>
<sequence length="419" mass="49607">MKFTELTVTEFDNFVQNPSLESHYFQVKENIVTRENDGFEVVLLGIKDDNNKVIAASLFSKIPTMGSYVYYSNRGPVMDFSDLGLVDYYLKELDKYLQQHQCLYVKLDPYWLYHLYDKDIVPFEGREKNDALVNLFKSHGYEHHGFTTEYDTSSQVRWMGVLNLEGKTPETLKKTFDSQRKRNINKAINYGVKVRFLESDEFNLFLDLYRETEERAGFVSKTDDYFYNFIDTYGDKVLVPLAYIDLDEYVLKLQQELNDKENRRDQMMAKENKSDKQMKKIAELDKQIDHDQHELLNASELSKTDGPILNLASGVYFANAYEVNYFSGGSSEKYNQFMGPYMMHWFMINYCFDNGYDRYNFYGLSGDFTENSEDYGVYRFKRGFNVQIEELIGDFYKPIHKVKYWLFTTLDKLRKKLKK</sequence>
<proteinExistence type="inferred from homology"/>
<dbReference type="EC" id="2.3.2.18"/>
<dbReference type="EMBL" id="BA000033">
    <property type="protein sequence ID" value="BAB95127.1"/>
    <property type="molecule type" value="Genomic_DNA"/>
</dbReference>
<dbReference type="RefSeq" id="WP_000673106.1">
    <property type="nucleotide sequence ID" value="NC_003923.1"/>
</dbReference>
<dbReference type="SMR" id="Q8NWU0"/>
<dbReference type="KEGG" id="sam:MW1262"/>
<dbReference type="HOGENOM" id="CLU_048411_1_0_9"/>
<dbReference type="GO" id="GO:0005737">
    <property type="term" value="C:cytoplasm"/>
    <property type="evidence" value="ECO:0007669"/>
    <property type="project" value="UniProtKB-SubCell"/>
</dbReference>
<dbReference type="GO" id="GO:0016755">
    <property type="term" value="F:aminoacyltransferase activity"/>
    <property type="evidence" value="ECO:0007669"/>
    <property type="project" value="InterPro"/>
</dbReference>
<dbReference type="GO" id="GO:0071555">
    <property type="term" value="P:cell wall organization"/>
    <property type="evidence" value="ECO:0007669"/>
    <property type="project" value="UniProtKB-KW"/>
</dbReference>
<dbReference type="GO" id="GO:0009252">
    <property type="term" value="P:peptidoglycan biosynthetic process"/>
    <property type="evidence" value="ECO:0007669"/>
    <property type="project" value="UniProtKB-KW"/>
</dbReference>
<dbReference type="GO" id="GO:0008360">
    <property type="term" value="P:regulation of cell shape"/>
    <property type="evidence" value="ECO:0007669"/>
    <property type="project" value="UniProtKB-KW"/>
</dbReference>
<dbReference type="GO" id="GO:0046677">
    <property type="term" value="P:response to antibiotic"/>
    <property type="evidence" value="ECO:0007669"/>
    <property type="project" value="UniProtKB-KW"/>
</dbReference>
<dbReference type="Gene3D" id="1.20.58.90">
    <property type="match status" value="1"/>
</dbReference>
<dbReference type="Gene3D" id="3.40.630.30">
    <property type="match status" value="2"/>
</dbReference>
<dbReference type="InterPro" id="IPR016181">
    <property type="entry name" value="Acyl_CoA_acyltransferase"/>
</dbReference>
<dbReference type="InterPro" id="IPR003447">
    <property type="entry name" value="FEMABX"/>
</dbReference>
<dbReference type="InterPro" id="IPR050644">
    <property type="entry name" value="PG_Glycine_Bridge_Synth"/>
</dbReference>
<dbReference type="PANTHER" id="PTHR36174:SF2">
    <property type="entry name" value="AMINOACYLTRANSFERASE FEMA"/>
    <property type="match status" value="1"/>
</dbReference>
<dbReference type="PANTHER" id="PTHR36174">
    <property type="entry name" value="LIPID II:GLYCINE GLYCYLTRANSFERASE"/>
    <property type="match status" value="1"/>
</dbReference>
<dbReference type="Pfam" id="PF02388">
    <property type="entry name" value="FemAB"/>
    <property type="match status" value="1"/>
</dbReference>
<dbReference type="SUPFAM" id="SSF55729">
    <property type="entry name" value="Acyl-CoA N-acyltransferases (Nat)"/>
    <property type="match status" value="2"/>
</dbReference>
<dbReference type="PROSITE" id="PS51191">
    <property type="entry name" value="FEMABX"/>
    <property type="match status" value="1"/>
</dbReference>
<name>FEMB_STAAW</name>
<evidence type="ECO:0000250" key="1"/>
<evidence type="ECO:0000305" key="2"/>
<accession>Q8NWU0</accession>
<gene>
    <name type="primary">femB</name>
    <name type="ordered locus">MW1262</name>
</gene>